<protein>
    <recommendedName>
        <fullName evidence="7">Ketocytochalasin monooxygenase</fullName>
        <ecNumber evidence="3">1.14.13.-</ecNumber>
    </recommendedName>
    <alternativeName>
        <fullName evidence="6">Carbonate-forming Baeyer-Villiger monooxygenase</fullName>
        <shortName evidence="6">BVMO</shortName>
    </alternativeName>
    <alternativeName>
        <fullName evidence="5">Cytochalasin biosynthesis protein B</fullName>
    </alternativeName>
</protein>
<keyword id="KW-0274">FAD</keyword>
<keyword id="KW-0285">Flavoprotein</keyword>
<keyword id="KW-0503">Monooxygenase</keyword>
<keyword id="KW-0521">NADP</keyword>
<keyword id="KW-0560">Oxidoreductase</keyword>
<keyword id="KW-1185">Reference proteome</keyword>
<gene>
    <name evidence="5" type="primary">ccsB</name>
    <name type="ORF">ACLA_078650</name>
</gene>
<proteinExistence type="evidence at protein level"/>
<dbReference type="EC" id="1.14.13.-" evidence="3"/>
<dbReference type="EMBL" id="DS027057">
    <property type="protein sequence ID" value="EAW09116.1"/>
    <property type="molecule type" value="Genomic_DNA"/>
</dbReference>
<dbReference type="RefSeq" id="XP_001270542.1">
    <property type="nucleotide sequence ID" value="XM_001270541.1"/>
</dbReference>
<dbReference type="SMR" id="A1CLY7"/>
<dbReference type="STRING" id="344612.A1CLY7"/>
<dbReference type="EnsemblFungi" id="EAW09116">
    <property type="protein sequence ID" value="EAW09116"/>
    <property type="gene ID" value="ACLA_078650"/>
</dbReference>
<dbReference type="GeneID" id="4702675"/>
<dbReference type="KEGG" id="act:ACLA_078650"/>
<dbReference type="VEuPathDB" id="FungiDB:ACLA_078650"/>
<dbReference type="eggNOG" id="KOG1399">
    <property type="taxonomic scope" value="Eukaryota"/>
</dbReference>
<dbReference type="HOGENOM" id="CLU_006937_8_2_1"/>
<dbReference type="OMA" id="ALKPWYG"/>
<dbReference type="OrthoDB" id="66881at2759"/>
<dbReference type="Proteomes" id="UP000006701">
    <property type="component" value="Unassembled WGS sequence"/>
</dbReference>
<dbReference type="GO" id="GO:0004497">
    <property type="term" value="F:monooxygenase activity"/>
    <property type="evidence" value="ECO:0007669"/>
    <property type="project" value="UniProtKB-KW"/>
</dbReference>
<dbReference type="Gene3D" id="3.50.50.60">
    <property type="entry name" value="FAD/NAD(P)-binding domain"/>
    <property type="match status" value="2"/>
</dbReference>
<dbReference type="InterPro" id="IPR050775">
    <property type="entry name" value="FAD-binding_Monooxygenases"/>
</dbReference>
<dbReference type="InterPro" id="IPR036188">
    <property type="entry name" value="FAD/NAD-bd_sf"/>
</dbReference>
<dbReference type="PANTHER" id="PTHR43098:SF4">
    <property type="entry name" value="BLR3857 PROTEIN"/>
    <property type="match status" value="1"/>
</dbReference>
<dbReference type="PANTHER" id="PTHR43098">
    <property type="entry name" value="L-ORNITHINE N(5)-MONOOXYGENASE-RELATED"/>
    <property type="match status" value="1"/>
</dbReference>
<dbReference type="Pfam" id="PF13738">
    <property type="entry name" value="Pyr_redox_3"/>
    <property type="match status" value="1"/>
</dbReference>
<dbReference type="SUPFAM" id="SSF51905">
    <property type="entry name" value="FAD/NAD(P)-binding domain"/>
    <property type="match status" value="1"/>
</dbReference>
<sequence length="636" mass="72109">MGSLLSIVLRSATRIIRPIIPSSVLSLLSGPKPVHPLQTLQFDKEAILEKYQAERAKRLRQDGVSQFKSARSGAYDRFRQDVARPQSREPIEAETKVLIVGAGFAGLVAAVKLDQQGVQDFRIVDKAAGFGGTWYWNQYPGAACDVESLIYLPFLEETGYIPSRRFCYGPEIREQVNRVVAKWDLARRSHLSTEITSMTWDESILRWHVKTNHGDHFITQFVVMATGTFHEPKLPGIPGIENFKGDHFHSGRWDYRITGGDETGNMSQLANKTVGIIGTGASAVQLVPKLARDAKKLYVFQRTPSSIRFRDNSLYDTPSLKKSLPPGWQRQRMTDFANILTGQVVDQDCDALEGLQELTMRAILKEASDAGVTVQPEQIPELMQLADFRLMQQIRGQVDEIVKDQETAAKLKPWYSFMCKRPTFHNDYLAAFNNPNVELVDTDGQGVSYLTETAVVANGREYEVDLLVYSTGFDFDVEANFYRRTGIQLVGSRGRTFDEKWDEKGPSTLFGVHIREFPNLLYVGPAQTGVTANWTHTTYAVGDHIAEFVAKSLRDGQYQAFEPTEEAEEEWGRRNEEGSEMRLLFAQSCPPGYYNREGKPEEIPARWAYFPKGIIEWTRITQEWREKGDYQGMDKR</sequence>
<comment type="function">
    <text evidence="2 3 4">Ketocytochalasin monooxygenase; part of the gene cluster that mediates the biosynthesis of a family of the mycotoxins cytochalasins E and K (PubMed:21983160). The hybrid PKS-NRPS synthetase ccsA and the enoyl reductase ccsC are responsible for fusion of phenylalanine with an octaketide backbone and subsequent release of the stable tetramic acid precursor (PubMed:21983160, PubMed:27551732). The polyketide synthase module (PKS) of the PKS-NRPS ccsA is responsible for the synthesis of the octaketide backbone (PubMed:21983160). The downstream nonribosomal peptide synthetase (NRPS) amidates the carboxyl end of the octaketide with a phenylalanine (PubMed:21983160). A reductase-like domain (R) at the C-terminus catalyzes the reductive release of the polyketide-amino acid intermediate (PubMed:21983160). Because ccsA lacks a designated enoylreductase (ER) domain, the required activity is provided the enoyl reductase ccsC (PubMed:21983160, PubMed:27551732). Upon formation of the 11-membered carbocycle-fused perhydroisoindolone intermediate, a number of oxidative steps are required to afford the final cytochalasin E and K, including two hydroxylations at C17 and C18, one alcohol oxidation at C17, one epoxidation at C6 and C7 and two Baeyer-Villiger oxidations (PubMed:21983160). The oxidative modification at C17, C18 and the C6-C7 epoxidation are likely to be catalyzed by the two cytochrome P450 oxygenases ccsD and ccsG (PubMed:21983160). CcsD may be responsible for the epoxidation of the C6-C7 double bond (PubMed:21983160). CcsG may be responsible for the successive oxidative modifications at C17 and C18 (PubMed:21983160). The double Baeyer-Villiger oxidations of ketocytochalasin to precytochalasin and cytochalasin Z(16) are among the final steps leading to cytochalasin E and K and are catalyzed by ccsB (PubMed:21983160, PubMed:24838010). The first oxygen insertion step follows that of the classic BVMO mechanism, generating the ester precytochalasin (PubMed:24838010). Release of precytochalasin into an aqueous environment can generate the shunt product iso-precytochalasin through spontaneous isomerization (PubMed:24838010). Alternatively, precytochalasin can undergo further oxidation by ccsB to yield the in-line carbonate-containing cytochalasin Z(16) (PubMed:24838010). Cytochalasin Z(16) is a precursor to cytochalasin E and cytochalasin K, whereas iso-precytochalasin is a precursor to cytochalasin Z(17) and rosellichalasin (PubMed:21983160, PubMed:24838010). The hydrolyase ccsE may catalyze hydrolysis of epoxide bond in cytochalasin E to afford cytochalasin K (PubMed:21983160). The function of ccsF has not been assigned but it may play a role in post-PKS-NRPS biosynthetic step, resistance or transport of cytochalasins and related PKS-NRPS products (PubMed:21983160).</text>
</comment>
<comment type="catalytic activity">
    <reaction evidence="3">
        <text>ketocytochalasin + NADPH + O2 + H(+) = iso-precytochalasin + NADP(+) + H2O</text>
        <dbReference type="Rhea" id="RHEA:47700"/>
        <dbReference type="ChEBI" id="CHEBI:15377"/>
        <dbReference type="ChEBI" id="CHEBI:15378"/>
        <dbReference type="ChEBI" id="CHEBI:15379"/>
        <dbReference type="ChEBI" id="CHEBI:57783"/>
        <dbReference type="ChEBI" id="CHEBI:58349"/>
        <dbReference type="ChEBI" id="CHEBI:87837"/>
        <dbReference type="ChEBI" id="CHEBI:87838"/>
    </reaction>
</comment>
<comment type="catalytic activity">
    <reaction evidence="3">
        <text>iso-precytochalasin + NADPH + O2 + H(+) = cytochalasin Z16 + NADP(+) + H2O</text>
        <dbReference type="Rhea" id="RHEA:47704"/>
        <dbReference type="ChEBI" id="CHEBI:15377"/>
        <dbReference type="ChEBI" id="CHEBI:15378"/>
        <dbReference type="ChEBI" id="CHEBI:15379"/>
        <dbReference type="ChEBI" id="CHEBI:57783"/>
        <dbReference type="ChEBI" id="CHEBI:58349"/>
        <dbReference type="ChEBI" id="CHEBI:87838"/>
        <dbReference type="ChEBI" id="CHEBI:87839"/>
    </reaction>
</comment>
<comment type="cofactor">
    <cofactor evidence="3">
        <name>FAD</name>
        <dbReference type="ChEBI" id="CHEBI:57692"/>
    </cofactor>
    <text evidence="1">Binds 1 FAD per subunit.</text>
</comment>
<comment type="pathway">
    <text evidence="8">Mycotoxin biosynthesis.</text>
</comment>
<comment type="similarity">
    <text evidence="7">Belongs to the FAD-binding monooxygenase family.</text>
</comment>
<name>CCSB_ASPCL</name>
<accession>A1CLY7</accession>
<evidence type="ECO:0000250" key="1">
    <source>
        <dbReference type="UniProtKB" id="Q47PU3"/>
    </source>
</evidence>
<evidence type="ECO:0000269" key="2">
    <source>
    </source>
</evidence>
<evidence type="ECO:0000269" key="3">
    <source>
    </source>
</evidence>
<evidence type="ECO:0000269" key="4">
    <source>
    </source>
</evidence>
<evidence type="ECO:0000303" key="5">
    <source>
    </source>
</evidence>
<evidence type="ECO:0000303" key="6">
    <source>
    </source>
</evidence>
<evidence type="ECO:0000305" key="7"/>
<evidence type="ECO:0000305" key="8">
    <source>
    </source>
</evidence>
<reference key="1">
    <citation type="journal article" date="2008" name="PLoS Genet.">
        <title>Genomic islands in the pathogenic filamentous fungus Aspergillus fumigatus.</title>
        <authorList>
            <person name="Fedorova N.D."/>
            <person name="Khaldi N."/>
            <person name="Joardar V.S."/>
            <person name="Maiti R."/>
            <person name="Amedeo P."/>
            <person name="Anderson M.J."/>
            <person name="Crabtree J."/>
            <person name="Silva J.C."/>
            <person name="Badger J.H."/>
            <person name="Albarraq A."/>
            <person name="Angiuoli S."/>
            <person name="Bussey H."/>
            <person name="Bowyer P."/>
            <person name="Cotty P.J."/>
            <person name="Dyer P.S."/>
            <person name="Egan A."/>
            <person name="Galens K."/>
            <person name="Fraser-Liggett C.M."/>
            <person name="Haas B.J."/>
            <person name="Inman J.M."/>
            <person name="Kent R."/>
            <person name="Lemieux S."/>
            <person name="Malavazi I."/>
            <person name="Orvis J."/>
            <person name="Roemer T."/>
            <person name="Ronning C.M."/>
            <person name="Sundaram J.P."/>
            <person name="Sutton G."/>
            <person name="Turner G."/>
            <person name="Venter J.C."/>
            <person name="White O.R."/>
            <person name="Whitty B.R."/>
            <person name="Youngman P."/>
            <person name="Wolfe K.H."/>
            <person name="Goldman G.H."/>
            <person name="Wortman J.R."/>
            <person name="Jiang B."/>
            <person name="Denning D.W."/>
            <person name="Nierman W.C."/>
        </authorList>
    </citation>
    <scope>NUCLEOTIDE SEQUENCE [LARGE SCALE GENOMIC DNA]</scope>
    <source>
        <strain>ATCC 1007 / CBS 513.65 / DSM 816 / NCTC 3887 / NRRL 1 / QM 1276 / 107</strain>
    </source>
</reference>
<reference key="2">
    <citation type="journal article" date="2011" name="Metab. Eng.">
        <title>Identification and engineering of the cytochalasin gene cluster from Aspergillus clavatus NRRL 1.</title>
        <authorList>
            <person name="Qiao K."/>
            <person name="Chooi Y.H."/>
            <person name="Tang Y."/>
        </authorList>
    </citation>
    <scope>FUNCTION</scope>
    <scope>PATHWAY</scope>
</reference>
<reference key="3">
    <citation type="journal article" date="2014" name="Nat. Chem. Biol.">
        <title>A carbonate-forming Baeyer-Villiger monooxygenase.</title>
        <authorList>
            <person name="Hu Y."/>
            <person name="Dietrich D."/>
            <person name="Xu W."/>
            <person name="Patel A."/>
            <person name="Thuss J.A."/>
            <person name="Wang J."/>
            <person name="Yin W.B."/>
            <person name="Qiao K."/>
            <person name="Houk K.N."/>
            <person name="Vederas J.C."/>
            <person name="Tang Y."/>
        </authorList>
    </citation>
    <scope>FUNCTION</scope>
    <scope>CATALYTIC ACTIVITY</scope>
    <scope>COFACTOR</scope>
    <scope>MUTAGENESIS OF ARG-421</scope>
    <source>
        <strain>ATCC 1007 / CBS 513.65 / DSM 816 / NCTC 3887 / NRRL 1</strain>
    </source>
</reference>
<reference key="4">
    <citation type="journal article" date="2016" name="PLoS ONE">
        <title>Linker flexibility facilitates module exchange in fungal hybrid PKS-NRPS engineering.</title>
        <authorList>
            <person name="Nielsen M.L."/>
            <person name="Isbrandt T."/>
            <person name="Petersen L.M."/>
            <person name="Mortensen U.H."/>
            <person name="Andersen M.R."/>
            <person name="Hoof J.B."/>
            <person name="Larsen T.O."/>
        </authorList>
    </citation>
    <scope>FUNCTION</scope>
</reference>
<feature type="chain" id="PRO_0000431478" description="Ketocytochalasin monooxygenase">
    <location>
        <begin position="1"/>
        <end position="636"/>
    </location>
</feature>
<feature type="binding site" evidence="1">
    <location>
        <position position="125"/>
    </location>
    <ligand>
        <name>FAD</name>
        <dbReference type="ChEBI" id="CHEBI:57692"/>
    </ligand>
</feature>
<feature type="binding site" evidence="1">
    <location>
        <begin position="133"/>
        <end position="136"/>
    </location>
    <ligand>
        <name>FAD</name>
        <dbReference type="ChEBI" id="CHEBI:57692"/>
    </ligand>
</feature>
<feature type="binding site" evidence="1">
    <location>
        <begin position="143"/>
        <end position="145"/>
    </location>
    <ligand>
        <name>NADP(+)</name>
        <dbReference type="ChEBI" id="CHEBI:58349"/>
    </ligand>
</feature>
<feature type="binding site" evidence="1">
    <location>
        <position position="145"/>
    </location>
    <ligand>
        <name>FAD</name>
        <dbReference type="ChEBI" id="CHEBI:57692"/>
    </ligand>
</feature>
<feature type="binding site" evidence="1">
    <location>
        <position position="151"/>
    </location>
    <ligand>
        <name>FAD</name>
        <dbReference type="ChEBI" id="CHEBI:57692"/>
    </ligand>
</feature>
<feature type="binding site" evidence="1">
    <location>
        <position position="195"/>
    </location>
    <ligand>
        <name>FAD</name>
        <dbReference type="ChEBI" id="CHEBI:57692"/>
    </ligand>
</feature>
<feature type="binding site" evidence="1">
    <location>
        <begin position="279"/>
        <end position="285"/>
    </location>
    <ligand>
        <name>NADP(+)</name>
        <dbReference type="ChEBI" id="CHEBI:58349"/>
    </ligand>
</feature>
<feature type="binding site" evidence="1">
    <location>
        <begin position="302"/>
        <end position="303"/>
    </location>
    <ligand>
        <name>NADP(+)</name>
        <dbReference type="ChEBI" id="CHEBI:58349"/>
    </ligand>
</feature>
<feature type="binding site" evidence="1">
    <location>
        <begin position="420"/>
        <end position="421"/>
    </location>
    <ligand>
        <name>NADP(+)</name>
        <dbReference type="ChEBI" id="CHEBI:58349"/>
    </ligand>
</feature>
<feature type="binding site" evidence="1">
    <location>
        <position position="534"/>
    </location>
    <ligand>
        <name>FAD</name>
        <dbReference type="ChEBI" id="CHEBI:57692"/>
    </ligand>
</feature>
<feature type="site" description="Transition state stabilizer" evidence="1">
    <location>
        <position position="421"/>
    </location>
</feature>
<feature type="mutagenesis site" description="Completely abolishes catalytic activity." evidence="3">
    <original>R</original>
    <variation>A</variation>
    <location>
        <position position="421"/>
    </location>
</feature>
<organism>
    <name type="scientific">Aspergillus clavatus (strain ATCC 1007 / CBS 513.65 / DSM 816 / NCTC 3887 / NRRL 1 / QM 1276 / 107)</name>
    <dbReference type="NCBI Taxonomy" id="344612"/>
    <lineage>
        <taxon>Eukaryota</taxon>
        <taxon>Fungi</taxon>
        <taxon>Dikarya</taxon>
        <taxon>Ascomycota</taxon>
        <taxon>Pezizomycotina</taxon>
        <taxon>Eurotiomycetes</taxon>
        <taxon>Eurotiomycetidae</taxon>
        <taxon>Eurotiales</taxon>
        <taxon>Aspergillaceae</taxon>
        <taxon>Aspergillus</taxon>
        <taxon>Aspergillus subgen. Fumigati</taxon>
    </lineage>
</organism>